<protein>
    <recommendedName>
        <fullName>Probable ATP-dependent RNA helicase ddx10</fullName>
        <ecNumber>3.6.4.13</ecNumber>
    </recommendedName>
    <alternativeName>
        <fullName>DEAD box protein 10</fullName>
    </alternativeName>
</protein>
<dbReference type="EC" id="3.6.4.13"/>
<dbReference type="EMBL" id="AAFI02000059">
    <property type="protein sequence ID" value="EAL65432.1"/>
    <property type="molecule type" value="Genomic_DNA"/>
</dbReference>
<dbReference type="RefSeq" id="XP_638786.1">
    <property type="nucleotide sequence ID" value="XM_633694.1"/>
</dbReference>
<dbReference type="SMR" id="Q54Q94"/>
<dbReference type="FunCoup" id="Q54Q94">
    <property type="interactions" value="1122"/>
</dbReference>
<dbReference type="STRING" id="44689.Q54Q94"/>
<dbReference type="PaxDb" id="44689-DDB0234197"/>
<dbReference type="EnsemblProtists" id="EAL65432">
    <property type="protein sequence ID" value="EAL65432"/>
    <property type="gene ID" value="DDB_G0284017"/>
</dbReference>
<dbReference type="GeneID" id="8624375"/>
<dbReference type="KEGG" id="ddi:DDB_G0284017"/>
<dbReference type="dictyBase" id="DDB_G0284017">
    <property type="gene designation" value="ddx10"/>
</dbReference>
<dbReference type="VEuPathDB" id="AmoebaDB:DDB_G0284017"/>
<dbReference type="eggNOG" id="KOG0343">
    <property type="taxonomic scope" value="Eukaryota"/>
</dbReference>
<dbReference type="HOGENOM" id="CLU_003041_26_1_1"/>
<dbReference type="InParanoid" id="Q54Q94"/>
<dbReference type="OMA" id="YDKMFER"/>
<dbReference type="PhylomeDB" id="Q54Q94"/>
<dbReference type="PRO" id="PR:Q54Q94"/>
<dbReference type="Proteomes" id="UP000002195">
    <property type="component" value="Chromosome 4"/>
</dbReference>
<dbReference type="GO" id="GO:0005730">
    <property type="term" value="C:nucleolus"/>
    <property type="evidence" value="ECO:0007669"/>
    <property type="project" value="UniProtKB-SubCell"/>
</dbReference>
<dbReference type="GO" id="GO:0005634">
    <property type="term" value="C:nucleus"/>
    <property type="evidence" value="ECO:0000318"/>
    <property type="project" value="GO_Central"/>
</dbReference>
<dbReference type="GO" id="GO:0005524">
    <property type="term" value="F:ATP binding"/>
    <property type="evidence" value="ECO:0007669"/>
    <property type="project" value="UniProtKB-KW"/>
</dbReference>
<dbReference type="GO" id="GO:0016887">
    <property type="term" value="F:ATP hydrolysis activity"/>
    <property type="evidence" value="ECO:0007669"/>
    <property type="project" value="RHEA"/>
</dbReference>
<dbReference type="GO" id="GO:0003723">
    <property type="term" value="F:RNA binding"/>
    <property type="evidence" value="ECO:0007669"/>
    <property type="project" value="UniProtKB-KW"/>
</dbReference>
<dbReference type="GO" id="GO:0003724">
    <property type="term" value="F:RNA helicase activity"/>
    <property type="evidence" value="ECO:0007669"/>
    <property type="project" value="UniProtKB-EC"/>
</dbReference>
<dbReference type="GO" id="GO:0006364">
    <property type="term" value="P:rRNA processing"/>
    <property type="evidence" value="ECO:0000318"/>
    <property type="project" value="GO_Central"/>
</dbReference>
<dbReference type="CDD" id="cd17941">
    <property type="entry name" value="DEADc_DDX10"/>
    <property type="match status" value="1"/>
</dbReference>
<dbReference type="CDD" id="cd18787">
    <property type="entry name" value="SF2_C_DEAD"/>
    <property type="match status" value="1"/>
</dbReference>
<dbReference type="Gene3D" id="3.40.50.300">
    <property type="entry name" value="P-loop containing nucleotide triphosphate hydrolases"/>
    <property type="match status" value="2"/>
</dbReference>
<dbReference type="InterPro" id="IPR011545">
    <property type="entry name" value="DEAD/DEAH_box_helicase_dom"/>
</dbReference>
<dbReference type="InterPro" id="IPR014001">
    <property type="entry name" value="Helicase_ATP-bd"/>
</dbReference>
<dbReference type="InterPro" id="IPR001650">
    <property type="entry name" value="Helicase_C-like"/>
</dbReference>
<dbReference type="InterPro" id="IPR027417">
    <property type="entry name" value="P-loop_NTPase"/>
</dbReference>
<dbReference type="InterPro" id="IPR000629">
    <property type="entry name" value="RNA-helicase_DEAD-box_CS"/>
</dbReference>
<dbReference type="InterPro" id="IPR014014">
    <property type="entry name" value="RNA_helicase_DEAD_Q_motif"/>
</dbReference>
<dbReference type="InterPro" id="IPR025313">
    <property type="entry name" value="SPB4-like_CTE"/>
</dbReference>
<dbReference type="PANTHER" id="PTHR24031">
    <property type="entry name" value="RNA HELICASE"/>
    <property type="match status" value="1"/>
</dbReference>
<dbReference type="Pfam" id="PF13959">
    <property type="entry name" value="CTE_SPB4"/>
    <property type="match status" value="1"/>
</dbReference>
<dbReference type="Pfam" id="PF00270">
    <property type="entry name" value="DEAD"/>
    <property type="match status" value="1"/>
</dbReference>
<dbReference type="Pfam" id="PF00271">
    <property type="entry name" value="Helicase_C"/>
    <property type="match status" value="1"/>
</dbReference>
<dbReference type="SMART" id="SM00487">
    <property type="entry name" value="DEXDc"/>
    <property type="match status" value="1"/>
</dbReference>
<dbReference type="SMART" id="SM01178">
    <property type="entry name" value="DUF4217"/>
    <property type="match status" value="1"/>
</dbReference>
<dbReference type="SMART" id="SM00490">
    <property type="entry name" value="HELICc"/>
    <property type="match status" value="1"/>
</dbReference>
<dbReference type="SUPFAM" id="SSF52540">
    <property type="entry name" value="P-loop containing nucleoside triphosphate hydrolases"/>
    <property type="match status" value="1"/>
</dbReference>
<dbReference type="PROSITE" id="PS00039">
    <property type="entry name" value="DEAD_ATP_HELICASE"/>
    <property type="match status" value="1"/>
</dbReference>
<dbReference type="PROSITE" id="PS51192">
    <property type="entry name" value="HELICASE_ATP_BIND_1"/>
    <property type="match status" value="1"/>
</dbReference>
<dbReference type="PROSITE" id="PS51194">
    <property type="entry name" value="HELICASE_CTER"/>
    <property type="match status" value="1"/>
</dbReference>
<dbReference type="PROSITE" id="PS51195">
    <property type="entry name" value="Q_MOTIF"/>
    <property type="match status" value="1"/>
</dbReference>
<gene>
    <name type="primary">ddx10</name>
    <name type="ORF">DDB_G0284017</name>
</gene>
<reference key="1">
    <citation type="journal article" date="2005" name="Nature">
        <title>The genome of the social amoeba Dictyostelium discoideum.</title>
        <authorList>
            <person name="Eichinger L."/>
            <person name="Pachebat J.A."/>
            <person name="Gloeckner G."/>
            <person name="Rajandream M.A."/>
            <person name="Sucgang R."/>
            <person name="Berriman M."/>
            <person name="Song J."/>
            <person name="Olsen R."/>
            <person name="Szafranski K."/>
            <person name="Xu Q."/>
            <person name="Tunggal B."/>
            <person name="Kummerfeld S."/>
            <person name="Madera M."/>
            <person name="Konfortov B.A."/>
            <person name="Rivero F."/>
            <person name="Bankier A.T."/>
            <person name="Lehmann R."/>
            <person name="Hamlin N."/>
            <person name="Davies R."/>
            <person name="Gaudet P."/>
            <person name="Fey P."/>
            <person name="Pilcher K."/>
            <person name="Chen G."/>
            <person name="Saunders D."/>
            <person name="Sodergren E.J."/>
            <person name="Davis P."/>
            <person name="Kerhornou A."/>
            <person name="Nie X."/>
            <person name="Hall N."/>
            <person name="Anjard C."/>
            <person name="Hemphill L."/>
            <person name="Bason N."/>
            <person name="Farbrother P."/>
            <person name="Desany B."/>
            <person name="Just E."/>
            <person name="Morio T."/>
            <person name="Rost R."/>
            <person name="Churcher C.M."/>
            <person name="Cooper J."/>
            <person name="Haydock S."/>
            <person name="van Driessche N."/>
            <person name="Cronin A."/>
            <person name="Goodhead I."/>
            <person name="Muzny D.M."/>
            <person name="Mourier T."/>
            <person name="Pain A."/>
            <person name="Lu M."/>
            <person name="Harper D."/>
            <person name="Lindsay R."/>
            <person name="Hauser H."/>
            <person name="James K.D."/>
            <person name="Quiles M."/>
            <person name="Madan Babu M."/>
            <person name="Saito T."/>
            <person name="Buchrieser C."/>
            <person name="Wardroper A."/>
            <person name="Felder M."/>
            <person name="Thangavelu M."/>
            <person name="Johnson D."/>
            <person name="Knights A."/>
            <person name="Loulseged H."/>
            <person name="Mungall K.L."/>
            <person name="Oliver K."/>
            <person name="Price C."/>
            <person name="Quail M.A."/>
            <person name="Urushihara H."/>
            <person name="Hernandez J."/>
            <person name="Rabbinowitsch E."/>
            <person name="Steffen D."/>
            <person name="Sanders M."/>
            <person name="Ma J."/>
            <person name="Kohara Y."/>
            <person name="Sharp S."/>
            <person name="Simmonds M.N."/>
            <person name="Spiegler S."/>
            <person name="Tivey A."/>
            <person name="Sugano S."/>
            <person name="White B."/>
            <person name="Walker D."/>
            <person name="Woodward J.R."/>
            <person name="Winckler T."/>
            <person name="Tanaka Y."/>
            <person name="Shaulsky G."/>
            <person name="Schleicher M."/>
            <person name="Weinstock G.M."/>
            <person name="Rosenthal A."/>
            <person name="Cox E.C."/>
            <person name="Chisholm R.L."/>
            <person name="Gibbs R.A."/>
            <person name="Loomis W.F."/>
            <person name="Platzer M."/>
            <person name="Kay R.R."/>
            <person name="Williams J.G."/>
            <person name="Dear P.H."/>
            <person name="Noegel A.A."/>
            <person name="Barrell B.G."/>
            <person name="Kuspa A."/>
        </authorList>
    </citation>
    <scope>NUCLEOTIDE SEQUENCE [LARGE SCALE GENOMIC DNA]</scope>
    <source>
        <strain>AX4</strain>
    </source>
</reference>
<organism>
    <name type="scientific">Dictyostelium discoideum</name>
    <name type="common">Social amoeba</name>
    <dbReference type="NCBI Taxonomy" id="44689"/>
    <lineage>
        <taxon>Eukaryota</taxon>
        <taxon>Amoebozoa</taxon>
        <taxon>Evosea</taxon>
        <taxon>Eumycetozoa</taxon>
        <taxon>Dictyostelia</taxon>
        <taxon>Dictyosteliales</taxon>
        <taxon>Dictyosteliaceae</taxon>
        <taxon>Dictyostelium</taxon>
    </lineage>
</organism>
<evidence type="ECO:0000250" key="1"/>
<evidence type="ECO:0000255" key="2">
    <source>
        <dbReference type="PROSITE-ProRule" id="PRU00541"/>
    </source>
</evidence>
<evidence type="ECO:0000255" key="3">
    <source>
        <dbReference type="PROSITE-ProRule" id="PRU00542"/>
    </source>
</evidence>
<evidence type="ECO:0000256" key="4">
    <source>
        <dbReference type="SAM" id="MobiDB-lite"/>
    </source>
</evidence>
<evidence type="ECO:0000305" key="5"/>
<sequence length="878" mass="100358">MNKDKSKQKPQKKENNNNNNKNNNNNNNKTENNKTNKDFTKNKFDKDAKIDKVDNKKIFHNRSSQKRIAKLKKIELQKKPLTLKLNEIKSIEQRLIDEAPQRGTNPLANISSTTATTTTTTATKNDKEKEKEYKIDYPSATDFKDLPISQLTLKALTESKFLKLTDIQRASLPHTLCGRDILGAAKTGSGKTLSFILPILETLWRNRWGRDDGIGAIVLSPTRELAIQIFDVLKAVGKYHTFSAGLIIGGRNVQQEKDKINAMNILIATPGRLLQHMDETYGFDCSNLKILVLDEADRILDLGFSKCLNSIVENLPRERQTLLFSATQTKSIRDLARLSLQEPEYISVYEKDITTTPQNLTQTLCVIPLEMKLNMLFSFIKTHLTSKIIVFFASCKQVRFAHETFKLLNPGTTLFPLHGKMKQWTRLEVFEDFCKKKAGTLFATDIAARGLDFPAVEWVIQVDCPDDIETYIHRVGRTARNDAPGQSITILLPSEKDGMVNLMEKQKMKFEILEPNPEKLVSIDSKLSSFLSEKTDLKYLAQKSFVSYLRSVYRQSNKEIFKIQELNINEFSKSLGLLGTPNIQFGKASADSKNKSFVVSNIQKQLKDKKSKGEKDIDSSDDDDDDEERNKIGNSDDEDSEDDSDFQDDSDDDNKKVTKQQPKTNIEKLFDRKNANVMSETYQKLRTKEEDEEDDSMFVVKRRDHDLDNLDIVKRLSRKENKEKNFINDPTKLKFQESTSVPKDGKLPTSYIEKVKSEVEKGDVQDKILLKERLKRKKLKLQSKELRKQSGGGATGDDEEESVAYFVPPGEKDPYENGENDSDDESNDDDVWGQEYNSDDDDDDEESESEEQPKPITKKRTLEDHEESALKFLKKNRI</sequence>
<name>DDX10_DICDI</name>
<accession>Q54Q94</accession>
<comment type="function">
    <text evidence="1">Probable ATP-dependent RNA helicase which may be involved in ribosome biogenesis.</text>
</comment>
<comment type="catalytic activity">
    <reaction>
        <text>ATP + H2O = ADP + phosphate + H(+)</text>
        <dbReference type="Rhea" id="RHEA:13065"/>
        <dbReference type="ChEBI" id="CHEBI:15377"/>
        <dbReference type="ChEBI" id="CHEBI:15378"/>
        <dbReference type="ChEBI" id="CHEBI:30616"/>
        <dbReference type="ChEBI" id="CHEBI:43474"/>
        <dbReference type="ChEBI" id="CHEBI:456216"/>
        <dbReference type="EC" id="3.6.4.13"/>
    </reaction>
</comment>
<comment type="subcellular location">
    <subcellularLocation>
        <location evidence="1">Nucleus</location>
        <location evidence="1">Nucleolus</location>
    </subcellularLocation>
</comment>
<comment type="domain">
    <text>The Q motif is unique to and characteristic of the DEAD box family of RNA helicases and controls ATP binding and hydrolysis.</text>
</comment>
<comment type="similarity">
    <text evidence="5">Belongs to the DEAD box helicase family. DDX10/DBP4 subfamily.</text>
</comment>
<proteinExistence type="inferred from homology"/>
<feature type="chain" id="PRO_0000327412" description="Probable ATP-dependent RNA helicase ddx10">
    <location>
        <begin position="1"/>
        <end position="878"/>
    </location>
</feature>
<feature type="domain" description="Helicase ATP-binding" evidence="2">
    <location>
        <begin position="172"/>
        <end position="346"/>
    </location>
</feature>
<feature type="domain" description="Helicase C-terminal" evidence="3">
    <location>
        <begin position="372"/>
        <end position="521"/>
    </location>
</feature>
<feature type="region of interest" description="Disordered" evidence="4">
    <location>
        <begin position="1"/>
        <end position="53"/>
    </location>
</feature>
<feature type="region of interest" description="Disordered" evidence="4">
    <location>
        <begin position="102"/>
        <end position="130"/>
    </location>
</feature>
<feature type="region of interest" description="Disordered" evidence="4">
    <location>
        <begin position="608"/>
        <end position="675"/>
    </location>
</feature>
<feature type="region of interest" description="Disordered" evidence="4">
    <location>
        <begin position="781"/>
        <end position="878"/>
    </location>
</feature>
<feature type="short sequence motif" description="Q motif">
    <location>
        <begin position="141"/>
        <end position="169"/>
    </location>
</feature>
<feature type="short sequence motif" description="DEAD box">
    <location>
        <begin position="294"/>
        <end position="297"/>
    </location>
</feature>
<feature type="compositionally biased region" description="Basic and acidic residues" evidence="4">
    <location>
        <begin position="1"/>
        <end position="15"/>
    </location>
</feature>
<feature type="compositionally biased region" description="Low complexity" evidence="4">
    <location>
        <begin position="16"/>
        <end position="30"/>
    </location>
</feature>
<feature type="compositionally biased region" description="Basic and acidic residues" evidence="4">
    <location>
        <begin position="31"/>
        <end position="53"/>
    </location>
</feature>
<feature type="compositionally biased region" description="Polar residues" evidence="4">
    <location>
        <begin position="102"/>
        <end position="112"/>
    </location>
</feature>
<feature type="compositionally biased region" description="Low complexity" evidence="4">
    <location>
        <begin position="113"/>
        <end position="123"/>
    </location>
</feature>
<feature type="compositionally biased region" description="Basic and acidic residues" evidence="4">
    <location>
        <begin position="608"/>
        <end position="618"/>
    </location>
</feature>
<feature type="compositionally biased region" description="Acidic residues" evidence="4">
    <location>
        <begin position="635"/>
        <end position="652"/>
    </location>
</feature>
<feature type="compositionally biased region" description="Basic and acidic residues" evidence="4">
    <location>
        <begin position="665"/>
        <end position="674"/>
    </location>
</feature>
<feature type="compositionally biased region" description="Acidic residues" evidence="4">
    <location>
        <begin position="816"/>
        <end position="850"/>
    </location>
</feature>
<feature type="compositionally biased region" description="Basic and acidic residues" evidence="4">
    <location>
        <begin position="860"/>
        <end position="869"/>
    </location>
</feature>
<feature type="binding site" evidence="2">
    <location>
        <begin position="161"/>
        <end position="163"/>
    </location>
    <ligand>
        <name>ATP</name>
        <dbReference type="ChEBI" id="CHEBI:30616"/>
    </ligand>
</feature>
<feature type="binding site" evidence="1">
    <location>
        <position position="168"/>
    </location>
    <ligand>
        <name>ATP</name>
        <dbReference type="ChEBI" id="CHEBI:30616"/>
    </ligand>
</feature>
<feature type="binding site" evidence="2">
    <location>
        <begin position="185"/>
        <end position="192"/>
    </location>
    <ligand>
        <name>ATP</name>
        <dbReference type="ChEBI" id="CHEBI:30616"/>
    </ligand>
</feature>
<keyword id="KW-0067">ATP-binding</keyword>
<keyword id="KW-0347">Helicase</keyword>
<keyword id="KW-0378">Hydrolase</keyword>
<keyword id="KW-0547">Nucleotide-binding</keyword>
<keyword id="KW-0539">Nucleus</keyword>
<keyword id="KW-1185">Reference proteome</keyword>
<keyword id="KW-0690">Ribosome biogenesis</keyword>
<keyword id="KW-0694">RNA-binding</keyword>
<keyword id="KW-0698">rRNA processing</keyword>